<reference key="1">
    <citation type="journal article" date="2010" name="J. Bacteriol.">
        <title>Whole genome sequences of two Xylella fastidiosa strains (M12 and M23) causing almond leaf scorch disease in California.</title>
        <authorList>
            <person name="Chen J."/>
            <person name="Xie G."/>
            <person name="Han S."/>
            <person name="Chertkov O."/>
            <person name="Sims D."/>
            <person name="Civerolo E.L."/>
        </authorList>
    </citation>
    <scope>NUCLEOTIDE SEQUENCE [LARGE SCALE GENOMIC DNA]</scope>
    <source>
        <strain>M12</strain>
    </source>
</reference>
<evidence type="ECO:0000255" key="1">
    <source>
        <dbReference type="HAMAP-Rule" id="MF_01347"/>
    </source>
</evidence>
<accession>B0U598</accession>
<comment type="function">
    <text evidence="1">Produces ATP from ADP in the presence of a proton gradient across the membrane. The catalytic sites are hosted primarily by the beta subunits.</text>
</comment>
<comment type="catalytic activity">
    <reaction evidence="1">
        <text>ATP + H2O + 4 H(+)(in) = ADP + phosphate + 5 H(+)(out)</text>
        <dbReference type="Rhea" id="RHEA:57720"/>
        <dbReference type="ChEBI" id="CHEBI:15377"/>
        <dbReference type="ChEBI" id="CHEBI:15378"/>
        <dbReference type="ChEBI" id="CHEBI:30616"/>
        <dbReference type="ChEBI" id="CHEBI:43474"/>
        <dbReference type="ChEBI" id="CHEBI:456216"/>
        <dbReference type="EC" id="7.1.2.2"/>
    </reaction>
</comment>
<comment type="subunit">
    <text evidence="1">F-type ATPases have 2 components, CF(1) - the catalytic core - and CF(0) - the membrane proton channel. CF(1) has five subunits: alpha(3), beta(3), gamma(1), delta(1), epsilon(1). CF(0) has three main subunits: a(1), b(2) and c(9-12). The alpha and beta chains form an alternating ring which encloses part of the gamma chain. CF(1) is attached to CF(0) by a central stalk formed by the gamma and epsilon chains, while a peripheral stalk is formed by the delta and b chains.</text>
</comment>
<comment type="subcellular location">
    <subcellularLocation>
        <location evidence="1">Cell inner membrane</location>
        <topology evidence="1">Peripheral membrane protein</topology>
    </subcellularLocation>
</comment>
<comment type="similarity">
    <text evidence="1">Belongs to the ATPase alpha/beta chains family.</text>
</comment>
<sequence length="466" mass="50704">MNQGKIVQIIGAIVDVEFPRNNVPKVYNALKIDGTAIILEVQQQLGDGIVRTIALGSTDGLKRNLIATDTGHAITVPVGTGTLGRIMDVLGNPIDEAGPITYTDQWEIHRNAPSYEDQASTTELLETGIKVIDLMCPFAKGGKVGLFGGAGVGKTVNMMELINNIAKAHSGLSVFAGVGERTREGNDFYHEMKDSNVLDKVAMVYGQMNEPPGNRLRVALTGLTIAEYFRDEKDSSGKGKDVLLFIDNIYRYTLAGTEVSALLGRMPSAVGYQPTLAEEMGVLQERITSTANGSITSIQAVYVPADDLTDPSPATTFGHLDSTVTLSRSIAALGIYPAVDPLDSSSRQMDPLIIGEEHYNTTQRVQQTLQKYKDLKDIIAILGMDELSEDDKLAVSRARKIERFFSQPFHVAEVFTGAPGKYVPLKETIRGFKAIVDGEYDHLPEQAFYMVGNIEEVIEKANKMTA</sequence>
<protein>
    <recommendedName>
        <fullName evidence="1">ATP synthase subunit beta</fullName>
        <ecNumber evidence="1">7.1.2.2</ecNumber>
    </recommendedName>
    <alternativeName>
        <fullName evidence="1">ATP synthase F1 sector subunit beta</fullName>
    </alternativeName>
    <alternativeName>
        <fullName evidence="1">F-ATPase subunit beta</fullName>
    </alternativeName>
</protein>
<organism>
    <name type="scientific">Xylella fastidiosa (strain M12)</name>
    <dbReference type="NCBI Taxonomy" id="405440"/>
    <lineage>
        <taxon>Bacteria</taxon>
        <taxon>Pseudomonadati</taxon>
        <taxon>Pseudomonadota</taxon>
        <taxon>Gammaproteobacteria</taxon>
        <taxon>Lysobacterales</taxon>
        <taxon>Lysobacteraceae</taxon>
        <taxon>Xylella</taxon>
    </lineage>
</organism>
<proteinExistence type="inferred from homology"/>
<dbReference type="EC" id="7.1.2.2" evidence="1"/>
<dbReference type="EMBL" id="CP000941">
    <property type="protein sequence ID" value="ACA11494.1"/>
    <property type="molecule type" value="Genomic_DNA"/>
</dbReference>
<dbReference type="RefSeq" id="WP_004085644.1">
    <property type="nucleotide sequence ID" value="NC_010513.1"/>
</dbReference>
<dbReference type="SMR" id="B0U598"/>
<dbReference type="KEGG" id="xfm:Xfasm12_0485"/>
<dbReference type="HOGENOM" id="CLU_022398_0_2_6"/>
<dbReference type="GO" id="GO:0005886">
    <property type="term" value="C:plasma membrane"/>
    <property type="evidence" value="ECO:0007669"/>
    <property type="project" value="UniProtKB-SubCell"/>
</dbReference>
<dbReference type="GO" id="GO:0045259">
    <property type="term" value="C:proton-transporting ATP synthase complex"/>
    <property type="evidence" value="ECO:0007669"/>
    <property type="project" value="UniProtKB-KW"/>
</dbReference>
<dbReference type="GO" id="GO:0005524">
    <property type="term" value="F:ATP binding"/>
    <property type="evidence" value="ECO:0007669"/>
    <property type="project" value="UniProtKB-UniRule"/>
</dbReference>
<dbReference type="GO" id="GO:0016887">
    <property type="term" value="F:ATP hydrolysis activity"/>
    <property type="evidence" value="ECO:0007669"/>
    <property type="project" value="InterPro"/>
</dbReference>
<dbReference type="GO" id="GO:0046933">
    <property type="term" value="F:proton-transporting ATP synthase activity, rotational mechanism"/>
    <property type="evidence" value="ECO:0007669"/>
    <property type="project" value="UniProtKB-UniRule"/>
</dbReference>
<dbReference type="CDD" id="cd18110">
    <property type="entry name" value="ATP-synt_F1_beta_C"/>
    <property type="match status" value="1"/>
</dbReference>
<dbReference type="CDD" id="cd18115">
    <property type="entry name" value="ATP-synt_F1_beta_N"/>
    <property type="match status" value="1"/>
</dbReference>
<dbReference type="CDD" id="cd01133">
    <property type="entry name" value="F1-ATPase_beta_CD"/>
    <property type="match status" value="1"/>
</dbReference>
<dbReference type="FunFam" id="1.10.1140.10:FF:000001">
    <property type="entry name" value="ATP synthase subunit beta"/>
    <property type="match status" value="1"/>
</dbReference>
<dbReference type="FunFam" id="3.40.50.300:FF:000004">
    <property type="entry name" value="ATP synthase subunit beta"/>
    <property type="match status" value="1"/>
</dbReference>
<dbReference type="Gene3D" id="2.40.10.170">
    <property type="match status" value="1"/>
</dbReference>
<dbReference type="Gene3D" id="1.10.1140.10">
    <property type="entry name" value="Bovine Mitochondrial F1-atpase, Atp Synthase Beta Chain, Chain D, domain 3"/>
    <property type="match status" value="1"/>
</dbReference>
<dbReference type="Gene3D" id="3.40.50.300">
    <property type="entry name" value="P-loop containing nucleotide triphosphate hydrolases"/>
    <property type="match status" value="1"/>
</dbReference>
<dbReference type="HAMAP" id="MF_01347">
    <property type="entry name" value="ATP_synth_beta_bact"/>
    <property type="match status" value="1"/>
</dbReference>
<dbReference type="InterPro" id="IPR003593">
    <property type="entry name" value="AAA+_ATPase"/>
</dbReference>
<dbReference type="InterPro" id="IPR055190">
    <property type="entry name" value="ATP-synt_VA_C"/>
</dbReference>
<dbReference type="InterPro" id="IPR005722">
    <property type="entry name" value="ATP_synth_F1_bsu"/>
</dbReference>
<dbReference type="InterPro" id="IPR020003">
    <property type="entry name" value="ATPase_a/bsu_AS"/>
</dbReference>
<dbReference type="InterPro" id="IPR050053">
    <property type="entry name" value="ATPase_alpha/beta_chains"/>
</dbReference>
<dbReference type="InterPro" id="IPR004100">
    <property type="entry name" value="ATPase_F1/V1/A1_a/bsu_N"/>
</dbReference>
<dbReference type="InterPro" id="IPR036121">
    <property type="entry name" value="ATPase_F1/V1/A1_a/bsu_N_sf"/>
</dbReference>
<dbReference type="InterPro" id="IPR000194">
    <property type="entry name" value="ATPase_F1/V1/A1_a/bsu_nucl-bd"/>
</dbReference>
<dbReference type="InterPro" id="IPR024034">
    <property type="entry name" value="ATPase_F1/V1_b/a_C"/>
</dbReference>
<dbReference type="InterPro" id="IPR027417">
    <property type="entry name" value="P-loop_NTPase"/>
</dbReference>
<dbReference type="NCBIfam" id="TIGR01039">
    <property type="entry name" value="atpD"/>
    <property type="match status" value="1"/>
</dbReference>
<dbReference type="PANTHER" id="PTHR15184">
    <property type="entry name" value="ATP SYNTHASE"/>
    <property type="match status" value="1"/>
</dbReference>
<dbReference type="PANTHER" id="PTHR15184:SF71">
    <property type="entry name" value="ATP SYNTHASE SUBUNIT BETA, MITOCHONDRIAL"/>
    <property type="match status" value="1"/>
</dbReference>
<dbReference type="Pfam" id="PF00006">
    <property type="entry name" value="ATP-synt_ab"/>
    <property type="match status" value="1"/>
</dbReference>
<dbReference type="Pfam" id="PF02874">
    <property type="entry name" value="ATP-synt_ab_N"/>
    <property type="match status" value="1"/>
</dbReference>
<dbReference type="Pfam" id="PF22919">
    <property type="entry name" value="ATP-synt_VA_C"/>
    <property type="match status" value="1"/>
</dbReference>
<dbReference type="SMART" id="SM00382">
    <property type="entry name" value="AAA"/>
    <property type="match status" value="1"/>
</dbReference>
<dbReference type="SUPFAM" id="SSF47917">
    <property type="entry name" value="C-terminal domain of alpha and beta subunits of F1 ATP synthase"/>
    <property type="match status" value="1"/>
</dbReference>
<dbReference type="SUPFAM" id="SSF50615">
    <property type="entry name" value="N-terminal domain of alpha and beta subunits of F1 ATP synthase"/>
    <property type="match status" value="1"/>
</dbReference>
<dbReference type="SUPFAM" id="SSF52540">
    <property type="entry name" value="P-loop containing nucleoside triphosphate hydrolases"/>
    <property type="match status" value="1"/>
</dbReference>
<dbReference type="PROSITE" id="PS00152">
    <property type="entry name" value="ATPASE_ALPHA_BETA"/>
    <property type="match status" value="1"/>
</dbReference>
<feature type="chain" id="PRO_1000143565" description="ATP synthase subunit beta">
    <location>
        <begin position="1"/>
        <end position="466"/>
    </location>
</feature>
<feature type="binding site" evidence="1">
    <location>
        <begin position="148"/>
        <end position="155"/>
    </location>
    <ligand>
        <name>ATP</name>
        <dbReference type="ChEBI" id="CHEBI:30616"/>
    </ligand>
</feature>
<keyword id="KW-0066">ATP synthesis</keyword>
<keyword id="KW-0067">ATP-binding</keyword>
<keyword id="KW-0997">Cell inner membrane</keyword>
<keyword id="KW-1003">Cell membrane</keyword>
<keyword id="KW-0139">CF(1)</keyword>
<keyword id="KW-0375">Hydrogen ion transport</keyword>
<keyword id="KW-0406">Ion transport</keyword>
<keyword id="KW-0472">Membrane</keyword>
<keyword id="KW-0547">Nucleotide-binding</keyword>
<keyword id="KW-1278">Translocase</keyword>
<keyword id="KW-0813">Transport</keyword>
<gene>
    <name evidence="1" type="primary">atpD</name>
    <name type="ordered locus">Xfasm12_0485</name>
</gene>
<name>ATPB_XYLFM</name>